<proteinExistence type="inferred from homology"/>
<organism>
    <name type="scientific">Escherichia coli O157:H7</name>
    <dbReference type="NCBI Taxonomy" id="83334"/>
    <lineage>
        <taxon>Bacteria</taxon>
        <taxon>Pseudomonadati</taxon>
        <taxon>Pseudomonadota</taxon>
        <taxon>Gammaproteobacteria</taxon>
        <taxon>Enterobacterales</taxon>
        <taxon>Enterobacteriaceae</taxon>
        <taxon>Escherichia</taxon>
    </lineage>
</organism>
<evidence type="ECO:0000255" key="1">
    <source>
        <dbReference type="HAMAP-Rule" id="MF_01232"/>
    </source>
</evidence>
<evidence type="ECO:0000256" key="2">
    <source>
        <dbReference type="SAM" id="MobiDB-lite"/>
    </source>
</evidence>
<comment type="similarity">
    <text evidence="1">Belongs to the UPF0229 family.</text>
</comment>
<accession>Q8XDT8</accession>
<protein>
    <recommendedName>
        <fullName evidence="1">UPF0229 protein YeaH</fullName>
    </recommendedName>
</protein>
<dbReference type="EMBL" id="AE005174">
    <property type="protein sequence ID" value="AAG56773.1"/>
    <property type="molecule type" value="Genomic_DNA"/>
</dbReference>
<dbReference type="EMBL" id="BA000007">
    <property type="protein sequence ID" value="BAB35916.1"/>
    <property type="molecule type" value="Genomic_DNA"/>
</dbReference>
<dbReference type="PIR" id="A85789">
    <property type="entry name" value="A85789"/>
</dbReference>
<dbReference type="PIR" id="E90940">
    <property type="entry name" value="E90940"/>
</dbReference>
<dbReference type="RefSeq" id="NP_310520.1">
    <property type="nucleotide sequence ID" value="NC_002695.1"/>
</dbReference>
<dbReference type="RefSeq" id="WP_000219686.1">
    <property type="nucleotide sequence ID" value="NZ_VOAI01000010.1"/>
</dbReference>
<dbReference type="SMR" id="Q8XDT8"/>
<dbReference type="STRING" id="155864.Z2824"/>
<dbReference type="GeneID" id="912737"/>
<dbReference type="KEGG" id="ece:Z2824"/>
<dbReference type="KEGG" id="ecs:ECs_2493"/>
<dbReference type="PATRIC" id="fig|386585.9.peg.2610"/>
<dbReference type="eggNOG" id="COG2718">
    <property type="taxonomic scope" value="Bacteria"/>
</dbReference>
<dbReference type="HOGENOM" id="CLU_049702_0_0_6"/>
<dbReference type="OMA" id="QYFAYIE"/>
<dbReference type="Proteomes" id="UP000000558">
    <property type="component" value="Chromosome"/>
</dbReference>
<dbReference type="Proteomes" id="UP000002519">
    <property type="component" value="Chromosome"/>
</dbReference>
<dbReference type="HAMAP" id="MF_01232">
    <property type="entry name" value="UPF0229"/>
    <property type="match status" value="1"/>
</dbReference>
<dbReference type="InterPro" id="IPR006698">
    <property type="entry name" value="UPF0229"/>
</dbReference>
<dbReference type="NCBIfam" id="NF003707">
    <property type="entry name" value="PRK05325.1-2"/>
    <property type="match status" value="1"/>
</dbReference>
<dbReference type="NCBIfam" id="NF003708">
    <property type="entry name" value="PRK05325.1-3"/>
    <property type="match status" value="1"/>
</dbReference>
<dbReference type="PANTHER" id="PTHR30510">
    <property type="entry name" value="UPF0229 PROTEIN YEAH"/>
    <property type="match status" value="1"/>
</dbReference>
<dbReference type="PANTHER" id="PTHR30510:SF2">
    <property type="entry name" value="UPF0229 PROTEIN YEAH"/>
    <property type="match status" value="1"/>
</dbReference>
<dbReference type="Pfam" id="PF04285">
    <property type="entry name" value="DUF444"/>
    <property type="match status" value="1"/>
</dbReference>
<keyword id="KW-1185">Reference proteome</keyword>
<gene>
    <name evidence="1" type="primary">yeaH</name>
    <name type="ordered locus">Z2824</name>
    <name type="ordered locus">ECs2493</name>
</gene>
<feature type="chain" id="PRO_0000068196" description="UPF0229 protein YeaH">
    <location>
        <begin position="1"/>
        <end position="427"/>
    </location>
</feature>
<feature type="region of interest" description="Disordered" evidence="2">
    <location>
        <begin position="79"/>
        <end position="110"/>
    </location>
</feature>
<feature type="compositionally biased region" description="Basic and acidic residues" evidence="2">
    <location>
        <begin position="79"/>
        <end position="90"/>
    </location>
</feature>
<feature type="compositionally biased region" description="Gly residues" evidence="2">
    <location>
        <begin position="92"/>
        <end position="102"/>
    </location>
</feature>
<name>YEAH_ECO57</name>
<sequence length="427" mass="49450">MTWFIDRRLNGKNKSMVNRQRFLRRYKAQIKQSISEAINKRSVTDVDSGESVSIPTEDISEPMFHQGRGGLRHRVHPGNDHFVQNDRIERPQGGGGGSGSGQGQASQDGEGQDEFVFQISKDEYLDLLFEDLALPNLKQNQQRQLTEYKTHRAGYTANGVPANISVVRSLQNSLARRTAMTAGKRRELHALEENLAIISNSEPAQLLEEERLRKEIAELRAKIERVPFIDTFDLRYKNYEKRPDPSSQAVMFCLMDVSGSMDQSTKDMAKRFYILLYLFLSRTYKNVEVVYIRHHTQAKEVDEHEFFYSQETGGTIVSSALKLMDEVVKERYNPAQWNIYAAQASDGDNWADDSPLCHEILAKKLLPVVRYYSYIEITRRAHQTLWREYEHLQSTFDNFAMQHIRDQDDIYPVFRELFHKQNATAKD</sequence>
<reference key="1">
    <citation type="journal article" date="2001" name="Nature">
        <title>Genome sequence of enterohaemorrhagic Escherichia coli O157:H7.</title>
        <authorList>
            <person name="Perna N.T."/>
            <person name="Plunkett G. III"/>
            <person name="Burland V."/>
            <person name="Mau B."/>
            <person name="Glasner J.D."/>
            <person name="Rose D.J."/>
            <person name="Mayhew G.F."/>
            <person name="Evans P.S."/>
            <person name="Gregor J."/>
            <person name="Kirkpatrick H.A."/>
            <person name="Posfai G."/>
            <person name="Hackett J."/>
            <person name="Klink S."/>
            <person name="Boutin A."/>
            <person name="Shao Y."/>
            <person name="Miller L."/>
            <person name="Grotbeck E.J."/>
            <person name="Davis N.W."/>
            <person name="Lim A."/>
            <person name="Dimalanta E.T."/>
            <person name="Potamousis K."/>
            <person name="Apodaca J."/>
            <person name="Anantharaman T.S."/>
            <person name="Lin J."/>
            <person name="Yen G."/>
            <person name="Schwartz D.C."/>
            <person name="Welch R.A."/>
            <person name="Blattner F.R."/>
        </authorList>
    </citation>
    <scope>NUCLEOTIDE SEQUENCE [LARGE SCALE GENOMIC DNA]</scope>
    <source>
        <strain>O157:H7 / EDL933 / ATCC 700927 / EHEC</strain>
    </source>
</reference>
<reference key="2">
    <citation type="journal article" date="2001" name="DNA Res.">
        <title>Complete genome sequence of enterohemorrhagic Escherichia coli O157:H7 and genomic comparison with a laboratory strain K-12.</title>
        <authorList>
            <person name="Hayashi T."/>
            <person name="Makino K."/>
            <person name="Ohnishi M."/>
            <person name="Kurokawa K."/>
            <person name="Ishii K."/>
            <person name="Yokoyama K."/>
            <person name="Han C.-G."/>
            <person name="Ohtsubo E."/>
            <person name="Nakayama K."/>
            <person name="Murata T."/>
            <person name="Tanaka M."/>
            <person name="Tobe T."/>
            <person name="Iida T."/>
            <person name="Takami H."/>
            <person name="Honda T."/>
            <person name="Sasakawa C."/>
            <person name="Ogasawara N."/>
            <person name="Yasunaga T."/>
            <person name="Kuhara S."/>
            <person name="Shiba T."/>
            <person name="Hattori M."/>
            <person name="Shinagawa H."/>
        </authorList>
    </citation>
    <scope>NUCLEOTIDE SEQUENCE [LARGE SCALE GENOMIC DNA]</scope>
    <source>
        <strain>O157:H7 / Sakai / RIMD 0509952 / EHEC</strain>
    </source>
</reference>